<organism>
    <name type="scientific">Chlorocebus aethiops</name>
    <name type="common">Green monkey</name>
    <name type="synonym">Cercopithecus aethiops</name>
    <dbReference type="NCBI Taxonomy" id="9534"/>
    <lineage>
        <taxon>Eukaryota</taxon>
        <taxon>Metazoa</taxon>
        <taxon>Chordata</taxon>
        <taxon>Craniata</taxon>
        <taxon>Vertebrata</taxon>
        <taxon>Euteleostomi</taxon>
        <taxon>Mammalia</taxon>
        <taxon>Eutheria</taxon>
        <taxon>Euarchontoglires</taxon>
        <taxon>Primates</taxon>
        <taxon>Haplorrhini</taxon>
        <taxon>Catarrhini</taxon>
        <taxon>Cercopithecidae</taxon>
        <taxon>Cercopithecinae</taxon>
        <taxon>Chlorocebus</taxon>
    </lineage>
</organism>
<protein>
    <recommendedName>
        <fullName evidence="4">Large ribosomal subunit protein mL64</fullName>
    </recommendedName>
    <alternativeName>
        <fullName>39S ribosomal protein L59, mitochondrial</fullName>
        <shortName>MRP-L59</shortName>
    </alternativeName>
    <alternativeName>
        <fullName>Growth arrest and DNA damage-inducible proteins-interacting protein 1</fullName>
    </alternativeName>
    <alternativeName>
        <fullName>Papillomavirus L2-interacting nuclear protein 1</fullName>
        <shortName>PLINP-1</shortName>
    </alternativeName>
</protein>
<name>G45IP_CHLAE</name>
<proteinExistence type="evidence at transcript level"/>
<evidence type="ECO:0000250" key="1">
    <source>
        <dbReference type="UniProtKB" id="Q8TAE8"/>
    </source>
</evidence>
<evidence type="ECO:0000255" key="2"/>
<evidence type="ECO:0000256" key="3">
    <source>
        <dbReference type="SAM" id="MobiDB-lite"/>
    </source>
</evidence>
<evidence type="ECO:0000305" key="4"/>
<reference key="1">
    <citation type="thesis" date="2002" institute="University of Heidelberg" country="Germany">
        <title>Cellular interaction partners of the HPV minor capsid protein L2.</title>
        <authorList>
            <person name="Goernemann J."/>
        </authorList>
    </citation>
    <scope>NUCLEOTIDE SEQUENCE [MRNA]</scope>
</reference>
<sequence length="222" mass="25378">MAASVRKARSLLGLTATLAPGSRGYRAPPPPRREPGPWWPDPEDLLTHRWQLGPRYAAKQFARYGAASGVAPGSLWPSPEQLRELEAEEREWYPSLATMQESLRVKHLAEEQKRREREQHIAECMAKMPQMIVNWQQQQRERWEKAQADKERRARLQAEAQELLGYQVNPKSARFQELLQDLEKKERKRLKEEKQRQKQEARAAALAAAAAQDPAASGAPSS</sequence>
<keyword id="KW-0131">Cell cycle</keyword>
<keyword id="KW-0175">Coiled coil</keyword>
<keyword id="KW-0496">Mitochondrion</keyword>
<keyword id="KW-0539">Nucleus</keyword>
<keyword id="KW-0687">Ribonucleoprotein</keyword>
<keyword id="KW-0689">Ribosomal protein</keyword>
<accession>Q8SPE7</accession>
<gene>
    <name type="primary">GADD45GIP1</name>
    <name type="synonym">MRPL59</name>
    <name type="synonym">PLINP</name>
</gene>
<dbReference type="EMBL" id="AJ437508">
    <property type="protein sequence ID" value="CAD26811.1"/>
    <property type="molecule type" value="mRNA"/>
</dbReference>
<dbReference type="SMR" id="Q8SPE7"/>
<dbReference type="IntAct" id="Q8SPE7">
    <property type="interactions" value="3"/>
</dbReference>
<dbReference type="GO" id="GO:0005739">
    <property type="term" value="C:mitochondrion"/>
    <property type="evidence" value="ECO:0007669"/>
    <property type="project" value="UniProtKB-SubCell"/>
</dbReference>
<dbReference type="GO" id="GO:0005634">
    <property type="term" value="C:nucleus"/>
    <property type="evidence" value="ECO:0007669"/>
    <property type="project" value="UniProtKB-SubCell"/>
</dbReference>
<dbReference type="GO" id="GO:1990904">
    <property type="term" value="C:ribonucleoprotein complex"/>
    <property type="evidence" value="ECO:0007669"/>
    <property type="project" value="UniProtKB-KW"/>
</dbReference>
<dbReference type="GO" id="GO:0005840">
    <property type="term" value="C:ribosome"/>
    <property type="evidence" value="ECO:0007669"/>
    <property type="project" value="UniProtKB-KW"/>
</dbReference>
<dbReference type="Gene3D" id="6.10.280.120">
    <property type="entry name" value="Growth arrest and DNA-damage-inducible proteins-interacting protein 1"/>
    <property type="match status" value="1"/>
</dbReference>
<dbReference type="InterPro" id="IPR018472">
    <property type="entry name" value="Ribosomal_mL64"/>
</dbReference>
<dbReference type="InterPro" id="IPR043035">
    <property type="entry name" value="Ribosomal_mL64_sf"/>
</dbReference>
<dbReference type="PANTHER" id="PTHR31761">
    <property type="entry name" value="GROWTH ARREST AND DNA DAMAGE-INDUCIBLE PROTEINS-INTERACTING PROTEIN 1 GADD45GIP1"/>
    <property type="match status" value="1"/>
</dbReference>
<dbReference type="PANTHER" id="PTHR31761:SF1">
    <property type="entry name" value="LARGE RIBOSOMAL SUBUNIT PROTEIN ML64"/>
    <property type="match status" value="1"/>
</dbReference>
<dbReference type="Pfam" id="PF10147">
    <property type="entry name" value="CR6_interact"/>
    <property type="match status" value="1"/>
</dbReference>
<feature type="chain" id="PRO_0000228619" description="Large ribosomal subunit protein mL64">
    <location>
        <begin position="1"/>
        <end position="222"/>
    </location>
</feature>
<feature type="region of interest" description="Disordered" evidence="3">
    <location>
        <begin position="14"/>
        <end position="40"/>
    </location>
</feature>
<feature type="region of interest" description="Disordered" evidence="3">
    <location>
        <begin position="188"/>
        <end position="222"/>
    </location>
</feature>
<feature type="coiled-coil region" evidence="2">
    <location>
        <begin position="144"/>
        <end position="213"/>
    </location>
</feature>
<feature type="short sequence motif" description="Nuclear localization signal" evidence="2">
    <location>
        <begin position="184"/>
        <end position="200"/>
    </location>
</feature>
<feature type="compositionally biased region" description="Basic and acidic residues" evidence="3">
    <location>
        <begin position="188"/>
        <end position="201"/>
    </location>
</feature>
<feature type="compositionally biased region" description="Low complexity" evidence="3">
    <location>
        <begin position="202"/>
        <end position="216"/>
    </location>
</feature>
<comment type="function">
    <text evidence="1">Acts as a negative regulator of G1 to S cell cycle phase progression by inhibiting cyclin-dependent kinases. Inhibitory effects are additive with GADD45 proteins but also occur in the absence of GADD45 proteins. Acts as a repressor of the orphan nuclear receptor NR4A1 by inhibiting AB domain-mediated transcriptional activity. May be involved in the hormone-mediated regulation of NR4A1 transcriptional activity. May play a role in mitochondrial protein synthesis.</text>
</comment>
<comment type="subunit">
    <text evidence="1">Component of the mitochondrial ribosome large subunit (39S) which comprises a 16S rRNA and about 50 distinct proteins. Interacts with GADD45A, GADD45B and GADD45G. Interacts with NR4A1 via the NR4A1 AB domain. Interacts with ATAD3A and ATAD3B.</text>
</comment>
<comment type="subcellular location">
    <subcellularLocation>
        <location evidence="1">Mitochondrion</location>
    </subcellularLocation>
    <subcellularLocation>
        <location evidence="1">Nucleus</location>
    </subcellularLocation>
    <text evidence="1">Using N-terminally tagged constructs, has been found in the nucleus. C-terminally tagged constructs are targeted exclusively to mitochondria. This discrepancy may be explained by masking of a potential N-terminal mitochondrial targeting signal by the tag.</text>
</comment>
<comment type="similarity">
    <text evidence="4">Belongs to the mitochondrion-specific ribosomal protein mL64 family.</text>
</comment>